<keyword id="KW-0445">Lipid transport</keyword>
<keyword id="KW-0732">Signal</keyword>
<keyword id="KW-0813">Transport</keyword>
<accession>P0CP29</accession>
<accession>Q55TL6</accession>
<accession>Q5KIR9</accession>
<organism>
    <name type="scientific">Cryptococcus neoformans var. neoformans serotype D (strain B-3501A)</name>
    <name type="common">Filobasidiella neoformans</name>
    <dbReference type="NCBI Taxonomy" id="283643"/>
    <lineage>
        <taxon>Eukaryota</taxon>
        <taxon>Fungi</taxon>
        <taxon>Dikarya</taxon>
        <taxon>Basidiomycota</taxon>
        <taxon>Agaricomycotina</taxon>
        <taxon>Tremellomycetes</taxon>
        <taxon>Tremellales</taxon>
        <taxon>Cryptococcaceae</taxon>
        <taxon>Cryptococcus</taxon>
        <taxon>Cryptococcus neoformans species complex</taxon>
    </lineage>
</organism>
<comment type="function">
    <text evidence="1">Catalyzes the intermembrane transfer of phosphatidylglycerol and phosphatidylinositol.</text>
</comment>
<comment type="subunit">
    <text evidence="1">Monomer.</text>
</comment>
<comment type="similarity">
    <text evidence="3">Belongs to the NPC2 family.</text>
</comment>
<comment type="sequence caution" evidence="3">
    <conflict type="erroneous initiation">
        <sequence resource="EMBL-CDS" id="EAL21061"/>
    </conflict>
    <text>Extended N-terminus.</text>
</comment>
<dbReference type="EMBL" id="AAEY01000021">
    <property type="protein sequence ID" value="EAL21061.1"/>
    <property type="status" value="ALT_INIT"/>
    <property type="molecule type" value="Genomic_DNA"/>
</dbReference>
<dbReference type="RefSeq" id="XP_775708.1">
    <property type="nucleotide sequence ID" value="XM_770615.1"/>
</dbReference>
<dbReference type="SMR" id="P0CP29"/>
<dbReference type="EnsemblFungi" id="AAW42927">
    <property type="protein sequence ID" value="AAW42927"/>
    <property type="gene ID" value="CND01990"/>
</dbReference>
<dbReference type="GeneID" id="4935826"/>
<dbReference type="KEGG" id="cnb:CNBD4370"/>
<dbReference type="HOGENOM" id="CLU_097982_3_0_1"/>
<dbReference type="OrthoDB" id="3473at5206"/>
<dbReference type="GO" id="GO:0032934">
    <property type="term" value="F:sterol binding"/>
    <property type="evidence" value="ECO:0007669"/>
    <property type="project" value="InterPro"/>
</dbReference>
<dbReference type="GO" id="GO:0032366">
    <property type="term" value="P:intracellular sterol transport"/>
    <property type="evidence" value="ECO:0007669"/>
    <property type="project" value="InterPro"/>
</dbReference>
<dbReference type="CDD" id="cd00917">
    <property type="entry name" value="PG-PI_TP"/>
    <property type="match status" value="1"/>
</dbReference>
<dbReference type="FunFam" id="2.70.220.10:FF:000002">
    <property type="entry name" value="Phosphatidylglycerol/phosphatidylinositol transfer protein"/>
    <property type="match status" value="1"/>
</dbReference>
<dbReference type="FunFam" id="2.70.220.10:FF:000004">
    <property type="entry name" value="Related to phosphatidylglycerol/phosphatidylinositol transfer protein"/>
    <property type="match status" value="1"/>
</dbReference>
<dbReference type="Gene3D" id="2.70.220.10">
    <property type="entry name" value="Ganglioside GM2 activator"/>
    <property type="match status" value="1"/>
</dbReference>
<dbReference type="InterPro" id="IPR036846">
    <property type="entry name" value="GM2-AP_sf"/>
</dbReference>
<dbReference type="InterPro" id="IPR014756">
    <property type="entry name" value="Ig_E-set"/>
</dbReference>
<dbReference type="InterPro" id="IPR003172">
    <property type="entry name" value="ML_dom"/>
</dbReference>
<dbReference type="InterPro" id="IPR033917">
    <property type="entry name" value="ML_PG-PI_TP"/>
</dbReference>
<dbReference type="InterPro" id="IPR039670">
    <property type="entry name" value="NPC2-like"/>
</dbReference>
<dbReference type="PANTHER" id="PTHR11306">
    <property type="entry name" value="NIEMANN PICK TYPE C2 PROTEIN NPC2-RELATED"/>
    <property type="match status" value="1"/>
</dbReference>
<dbReference type="PANTHER" id="PTHR11306:SF0">
    <property type="entry name" value="PHOSPHATIDYLGLYCEROL_PHOSPHATIDYLINOSITOL TRANSFER PROTEIN"/>
    <property type="match status" value="1"/>
</dbReference>
<dbReference type="Pfam" id="PF02221">
    <property type="entry name" value="E1_DerP2_DerF2"/>
    <property type="match status" value="1"/>
</dbReference>
<dbReference type="SMART" id="SM00737">
    <property type="entry name" value="ML"/>
    <property type="match status" value="1"/>
</dbReference>
<dbReference type="SUPFAM" id="SSF81296">
    <property type="entry name" value="E set domains"/>
    <property type="match status" value="1"/>
</dbReference>
<feature type="signal peptide" evidence="2">
    <location>
        <begin position="1"/>
        <end position="20"/>
    </location>
</feature>
<feature type="propeptide" id="PRO_0000410171" evidence="1">
    <location>
        <begin position="21"/>
        <end position="43"/>
    </location>
</feature>
<feature type="chain" id="PRO_0000410172" description="Phosphatidylglycerol/phosphatidylinositol transfer protein">
    <location>
        <begin position="44"/>
        <end position="180"/>
    </location>
</feature>
<proteinExistence type="inferred from homology"/>
<gene>
    <name type="primary">NPC2</name>
    <name type="ordered locus">CNBD4370</name>
</gene>
<name>NPC2_CRYNB</name>
<reference key="1">
    <citation type="journal article" date="2005" name="Science">
        <title>The genome of the basidiomycetous yeast and human pathogen Cryptococcus neoformans.</title>
        <authorList>
            <person name="Loftus B.J."/>
            <person name="Fung E."/>
            <person name="Roncaglia P."/>
            <person name="Rowley D."/>
            <person name="Amedeo P."/>
            <person name="Bruno D."/>
            <person name="Vamathevan J."/>
            <person name="Miranda M."/>
            <person name="Anderson I.J."/>
            <person name="Fraser J.A."/>
            <person name="Allen J.E."/>
            <person name="Bosdet I.E."/>
            <person name="Brent M.R."/>
            <person name="Chiu R."/>
            <person name="Doering T.L."/>
            <person name="Donlin M.J."/>
            <person name="D'Souza C.A."/>
            <person name="Fox D.S."/>
            <person name="Grinberg V."/>
            <person name="Fu J."/>
            <person name="Fukushima M."/>
            <person name="Haas B.J."/>
            <person name="Huang J.C."/>
            <person name="Janbon G."/>
            <person name="Jones S.J.M."/>
            <person name="Koo H.L."/>
            <person name="Krzywinski M.I."/>
            <person name="Kwon-Chung K.J."/>
            <person name="Lengeler K.B."/>
            <person name="Maiti R."/>
            <person name="Marra M.A."/>
            <person name="Marra R.E."/>
            <person name="Mathewson C.A."/>
            <person name="Mitchell T.G."/>
            <person name="Pertea M."/>
            <person name="Riggs F.R."/>
            <person name="Salzberg S.L."/>
            <person name="Schein J.E."/>
            <person name="Shvartsbeyn A."/>
            <person name="Shin H."/>
            <person name="Shumway M."/>
            <person name="Specht C.A."/>
            <person name="Suh B.B."/>
            <person name="Tenney A."/>
            <person name="Utterback T.R."/>
            <person name="Wickes B.L."/>
            <person name="Wortman J.R."/>
            <person name="Wye N.H."/>
            <person name="Kronstad J.W."/>
            <person name="Lodge J.K."/>
            <person name="Heitman J."/>
            <person name="Davis R.W."/>
            <person name="Fraser C.M."/>
            <person name="Hyman R.W."/>
        </authorList>
    </citation>
    <scope>NUCLEOTIDE SEQUENCE [LARGE SCALE GENOMIC DNA]</scope>
    <source>
        <strain>B-3501A</strain>
    </source>
</reference>
<evidence type="ECO:0000250" key="1"/>
<evidence type="ECO:0000255" key="2"/>
<evidence type="ECO:0000305" key="3"/>
<sequence length="180" mass="19320">MKLAPFLIPFIATTVTASLAGEALSWAGQLVGGGRGALATGDGPVRTENSWSYVDCGLATDAIQLKSIKVHPDPPVPGKNLTVTVEGDVLETIEEGAYVDVTVKLGLIKLLQKEFDVCDEARHANASVQCPVQPGPYTVTETVELPQEIPKAKFSVLVRGYTVDDEDMVCLDLFVDFMKK</sequence>
<protein>
    <recommendedName>
        <fullName>Phosphatidylglycerol/phosphatidylinositol transfer protein</fullName>
        <shortName>PG/PI-TP</shortName>
    </recommendedName>
</protein>